<comment type="function">
    <text evidence="3">Catalyzes the interconversion of L-ribulose 5-phosphate (LRu5P) and D-xylulose 5-phosphate (D-Xu5P) via a retroaldol/aldol mechanism (carbon-carbon bond cleavage analogous to a class II aldolase reaction). May be involved in the utilization of 2,3-diketo-L-gulonate.</text>
</comment>
<comment type="catalytic activity">
    <reaction evidence="3">
        <text>L-ribulose 5-phosphate = D-xylulose 5-phosphate</text>
        <dbReference type="Rhea" id="RHEA:22368"/>
        <dbReference type="ChEBI" id="CHEBI:57737"/>
        <dbReference type="ChEBI" id="CHEBI:58226"/>
        <dbReference type="EC" id="5.1.3.4"/>
    </reaction>
</comment>
<comment type="cofactor">
    <cofactor evidence="1">
        <name>Zn(2+)</name>
        <dbReference type="ChEBI" id="CHEBI:29105"/>
    </cofactor>
    <text evidence="1">Binds 1 zinc ion per subunit.</text>
</comment>
<comment type="similarity">
    <text evidence="3">Belongs to the aldolase class II family. AraD/FucA subfamily.</text>
</comment>
<proteinExistence type="inferred from homology"/>
<gene>
    <name evidence="3" type="primary">sgbE</name>
    <name type="ordered locus">HI_1025</name>
</gene>
<accession>P44989</accession>
<name>SGBE_HAEIN</name>
<organism>
    <name type="scientific">Haemophilus influenzae (strain ATCC 51907 / DSM 11121 / KW20 / Rd)</name>
    <dbReference type="NCBI Taxonomy" id="71421"/>
    <lineage>
        <taxon>Bacteria</taxon>
        <taxon>Pseudomonadati</taxon>
        <taxon>Pseudomonadota</taxon>
        <taxon>Gammaproteobacteria</taxon>
        <taxon>Pasteurellales</taxon>
        <taxon>Pasteurellaceae</taxon>
        <taxon>Haemophilus</taxon>
    </lineage>
</organism>
<keyword id="KW-0119">Carbohydrate metabolism</keyword>
<keyword id="KW-0413">Isomerase</keyword>
<keyword id="KW-0479">Metal-binding</keyword>
<keyword id="KW-1185">Reference proteome</keyword>
<keyword id="KW-0862">Zinc</keyword>
<dbReference type="EC" id="5.1.3.4" evidence="3"/>
<dbReference type="EMBL" id="L42023">
    <property type="protein sequence ID" value="AAC22685.1"/>
    <property type="molecule type" value="Genomic_DNA"/>
</dbReference>
<dbReference type="RefSeq" id="NP_439185.1">
    <property type="nucleotide sequence ID" value="NC_000907.1"/>
</dbReference>
<dbReference type="SMR" id="P44989"/>
<dbReference type="STRING" id="71421.HI_1025"/>
<dbReference type="EnsemblBacteria" id="AAC22685">
    <property type="protein sequence ID" value="AAC22685"/>
    <property type="gene ID" value="HI_1025"/>
</dbReference>
<dbReference type="KEGG" id="hin:HI_1025"/>
<dbReference type="PATRIC" id="fig|71421.8.peg.1069"/>
<dbReference type="eggNOG" id="COG0235">
    <property type="taxonomic scope" value="Bacteria"/>
</dbReference>
<dbReference type="HOGENOM" id="CLU_006033_5_0_6"/>
<dbReference type="OrthoDB" id="9786287at2"/>
<dbReference type="PhylomeDB" id="P44989"/>
<dbReference type="BioCyc" id="HINF71421:G1GJ1-1065-MONOMER"/>
<dbReference type="Proteomes" id="UP000000579">
    <property type="component" value="Chromosome"/>
</dbReference>
<dbReference type="GO" id="GO:0005829">
    <property type="term" value="C:cytosol"/>
    <property type="evidence" value="ECO:0000318"/>
    <property type="project" value="GO_Central"/>
</dbReference>
<dbReference type="GO" id="GO:0016832">
    <property type="term" value="F:aldehyde-lyase activity"/>
    <property type="evidence" value="ECO:0000318"/>
    <property type="project" value="GO_Central"/>
</dbReference>
<dbReference type="GO" id="GO:0008742">
    <property type="term" value="F:L-ribulose-phosphate 4-epimerase activity"/>
    <property type="evidence" value="ECO:0000250"/>
    <property type="project" value="UniProtKB"/>
</dbReference>
<dbReference type="GO" id="GO:0008270">
    <property type="term" value="F:zinc ion binding"/>
    <property type="evidence" value="ECO:0000250"/>
    <property type="project" value="UniProtKB"/>
</dbReference>
<dbReference type="GO" id="GO:0019572">
    <property type="term" value="P:L-arabinose catabolic process"/>
    <property type="evidence" value="ECO:0007669"/>
    <property type="project" value="InterPro"/>
</dbReference>
<dbReference type="GO" id="GO:0019323">
    <property type="term" value="P:pentose catabolic process"/>
    <property type="evidence" value="ECO:0000318"/>
    <property type="project" value="GO_Central"/>
</dbReference>
<dbReference type="CDD" id="cd00398">
    <property type="entry name" value="Aldolase_II"/>
    <property type="match status" value="1"/>
</dbReference>
<dbReference type="FunFam" id="3.40.225.10:FF:000001">
    <property type="entry name" value="L-ribulose-5-phosphate 4-epimerase UlaF"/>
    <property type="match status" value="1"/>
</dbReference>
<dbReference type="Gene3D" id="3.40.225.10">
    <property type="entry name" value="Class II aldolase/adducin N-terminal domain"/>
    <property type="match status" value="1"/>
</dbReference>
<dbReference type="InterPro" id="IPR050197">
    <property type="entry name" value="Aldolase_class_II_sugar_metab"/>
</dbReference>
<dbReference type="InterPro" id="IPR001303">
    <property type="entry name" value="Aldolase_II/adducin_N"/>
</dbReference>
<dbReference type="InterPro" id="IPR036409">
    <property type="entry name" value="Aldolase_II/adducin_N_sf"/>
</dbReference>
<dbReference type="InterPro" id="IPR004661">
    <property type="entry name" value="AraD"/>
</dbReference>
<dbReference type="NCBIfam" id="TIGR00760">
    <property type="entry name" value="araD"/>
    <property type="match status" value="1"/>
</dbReference>
<dbReference type="NCBIfam" id="NF006047">
    <property type="entry name" value="PRK08193.1"/>
    <property type="match status" value="1"/>
</dbReference>
<dbReference type="NCBIfam" id="NF009002">
    <property type="entry name" value="PRK12347.1"/>
    <property type="match status" value="1"/>
</dbReference>
<dbReference type="NCBIfam" id="NF009003">
    <property type="entry name" value="PRK12348.1"/>
    <property type="match status" value="1"/>
</dbReference>
<dbReference type="PANTHER" id="PTHR22789">
    <property type="entry name" value="FUCULOSE PHOSPHATE ALDOLASE"/>
    <property type="match status" value="1"/>
</dbReference>
<dbReference type="PANTHER" id="PTHR22789:SF8">
    <property type="entry name" value="L-RIBULOSE-5-PHOSPHATE 4-EPIMERASE SGBE"/>
    <property type="match status" value="1"/>
</dbReference>
<dbReference type="Pfam" id="PF00596">
    <property type="entry name" value="Aldolase_II"/>
    <property type="match status" value="1"/>
</dbReference>
<dbReference type="SMART" id="SM01007">
    <property type="entry name" value="Aldolase_II"/>
    <property type="match status" value="1"/>
</dbReference>
<dbReference type="SUPFAM" id="SSF53639">
    <property type="entry name" value="AraD/HMP-PK domain-like"/>
    <property type="match status" value="1"/>
</dbReference>
<protein>
    <recommendedName>
        <fullName evidence="3">L-ribulose-5-phosphate 4-epimerase SgbE</fullName>
        <ecNumber evidence="3">5.1.3.4</ecNumber>
    </recommendedName>
    <alternativeName>
        <fullName evidence="3">Phosphoribulose isomerase</fullName>
    </alternativeName>
</protein>
<feature type="chain" id="PRO_0000162924" description="L-ribulose-5-phosphate 4-epimerase SgbE">
    <location>
        <begin position="1"/>
        <end position="231"/>
    </location>
</feature>
<feature type="active site" description="Proton donor/acceptor" evidence="1">
    <location>
        <position position="120"/>
    </location>
</feature>
<feature type="active site" description="Proton donor/acceptor" evidence="1">
    <location>
        <position position="229"/>
    </location>
</feature>
<feature type="binding site" evidence="2">
    <location>
        <begin position="27"/>
        <end position="28"/>
    </location>
    <ligand>
        <name>substrate</name>
    </ligand>
</feature>
<feature type="binding site" evidence="2">
    <location>
        <begin position="44"/>
        <end position="45"/>
    </location>
    <ligand>
        <name>substrate</name>
    </ligand>
</feature>
<feature type="binding site" evidence="2">
    <location>
        <begin position="74"/>
        <end position="75"/>
    </location>
    <ligand>
        <name>substrate</name>
    </ligand>
</feature>
<feature type="binding site" evidence="1">
    <location>
        <position position="76"/>
    </location>
    <ligand>
        <name>Zn(2+)</name>
        <dbReference type="ChEBI" id="CHEBI:29105"/>
    </ligand>
</feature>
<feature type="binding site" evidence="1">
    <location>
        <position position="95"/>
    </location>
    <ligand>
        <name>Zn(2+)</name>
        <dbReference type="ChEBI" id="CHEBI:29105"/>
    </ligand>
</feature>
<feature type="binding site" evidence="1">
    <location>
        <position position="97"/>
    </location>
    <ligand>
        <name>Zn(2+)</name>
        <dbReference type="ChEBI" id="CHEBI:29105"/>
    </ligand>
</feature>
<feature type="binding site" evidence="1">
    <location>
        <position position="171"/>
    </location>
    <ligand>
        <name>Zn(2+)</name>
        <dbReference type="ChEBI" id="CHEBI:29105"/>
    </ligand>
</feature>
<sequence>MLAQLKKEVFEANLALPKHHLVTFTWGNVSAIDREKNLVVIKPSGVDYDVMTENDMVVVDLFTGNIVEGNKKPSSDTPTHLELYRQFPHIGGIVHTHSRHATIWAQAGLDIIEVGTTHGDYFYGTIPCTRQMTTKEIKGNYELETGKVIVETFLSRGIEPDNIPAVLVHSHGPFAWGKDANNAVHNAVVLEEVAYMNLFSQQLNPYLSPMQKDLLDKHYLRKHGQNAYYGQ</sequence>
<evidence type="ECO:0000250" key="1">
    <source>
        <dbReference type="UniProtKB" id="P08203"/>
    </source>
</evidence>
<evidence type="ECO:0000250" key="2">
    <source>
        <dbReference type="UniProtKB" id="P0AB87"/>
    </source>
</evidence>
<evidence type="ECO:0000250" key="3">
    <source>
        <dbReference type="UniProtKB" id="P37680"/>
    </source>
</evidence>
<reference key="1">
    <citation type="journal article" date="1995" name="Science">
        <title>Whole-genome random sequencing and assembly of Haemophilus influenzae Rd.</title>
        <authorList>
            <person name="Fleischmann R.D."/>
            <person name="Adams M.D."/>
            <person name="White O."/>
            <person name="Clayton R.A."/>
            <person name="Kirkness E.F."/>
            <person name="Kerlavage A.R."/>
            <person name="Bult C.J."/>
            <person name="Tomb J.-F."/>
            <person name="Dougherty B.A."/>
            <person name="Merrick J.M."/>
            <person name="McKenney K."/>
            <person name="Sutton G.G."/>
            <person name="FitzHugh W."/>
            <person name="Fields C.A."/>
            <person name="Gocayne J.D."/>
            <person name="Scott J.D."/>
            <person name="Shirley R."/>
            <person name="Liu L.-I."/>
            <person name="Glodek A."/>
            <person name="Kelley J.M."/>
            <person name="Weidman J.F."/>
            <person name="Phillips C.A."/>
            <person name="Spriggs T."/>
            <person name="Hedblom E."/>
            <person name="Cotton M.D."/>
            <person name="Utterback T.R."/>
            <person name="Hanna M.C."/>
            <person name="Nguyen D.T."/>
            <person name="Saudek D.M."/>
            <person name="Brandon R.C."/>
            <person name="Fine L.D."/>
            <person name="Fritchman J.L."/>
            <person name="Fuhrmann J.L."/>
            <person name="Geoghagen N.S.M."/>
            <person name="Gnehm C.L."/>
            <person name="McDonald L.A."/>
            <person name="Small K.V."/>
            <person name="Fraser C.M."/>
            <person name="Smith H.O."/>
            <person name="Venter J.C."/>
        </authorList>
    </citation>
    <scope>NUCLEOTIDE SEQUENCE [LARGE SCALE GENOMIC DNA]</scope>
    <source>
        <strain>ATCC 51907 / DSM 11121 / KW20 / Rd</strain>
    </source>
</reference>